<name>RL11_POLNA</name>
<feature type="chain" id="PRO_1000046236" description="Large ribosomal subunit protein uL11">
    <location>
        <begin position="1"/>
        <end position="144"/>
    </location>
</feature>
<accession>A1VTG2</accession>
<reference key="1">
    <citation type="journal article" date="2009" name="Environ. Microbiol.">
        <title>The genome of Polaromonas naphthalenivorans strain CJ2, isolated from coal tar-contaminated sediment, reveals physiological and metabolic versatility and evolution through extensive horizontal gene transfer.</title>
        <authorList>
            <person name="Yagi J.M."/>
            <person name="Sims D."/>
            <person name="Brettin T."/>
            <person name="Bruce D."/>
            <person name="Madsen E.L."/>
        </authorList>
    </citation>
    <scope>NUCLEOTIDE SEQUENCE [LARGE SCALE GENOMIC DNA]</scope>
    <source>
        <strain>CJ2</strain>
    </source>
</reference>
<protein>
    <recommendedName>
        <fullName evidence="1">Large ribosomal subunit protein uL11</fullName>
    </recommendedName>
    <alternativeName>
        <fullName evidence="2">50S ribosomal protein L11</fullName>
    </alternativeName>
</protein>
<gene>
    <name evidence="1" type="primary">rplK</name>
    <name type="ordered locus">Pnap_3644</name>
</gene>
<evidence type="ECO:0000255" key="1">
    <source>
        <dbReference type="HAMAP-Rule" id="MF_00736"/>
    </source>
</evidence>
<evidence type="ECO:0000305" key="2"/>
<dbReference type="EMBL" id="CP000529">
    <property type="protein sequence ID" value="ABM38940.1"/>
    <property type="molecule type" value="Genomic_DNA"/>
</dbReference>
<dbReference type="RefSeq" id="WP_011803007.1">
    <property type="nucleotide sequence ID" value="NC_008781.1"/>
</dbReference>
<dbReference type="SMR" id="A1VTG2"/>
<dbReference type="STRING" id="365044.Pnap_3644"/>
<dbReference type="KEGG" id="pna:Pnap_3644"/>
<dbReference type="eggNOG" id="COG0080">
    <property type="taxonomic scope" value="Bacteria"/>
</dbReference>
<dbReference type="HOGENOM" id="CLU_074237_2_0_4"/>
<dbReference type="OrthoDB" id="9802408at2"/>
<dbReference type="Proteomes" id="UP000000644">
    <property type="component" value="Chromosome"/>
</dbReference>
<dbReference type="GO" id="GO:0022625">
    <property type="term" value="C:cytosolic large ribosomal subunit"/>
    <property type="evidence" value="ECO:0007669"/>
    <property type="project" value="TreeGrafter"/>
</dbReference>
<dbReference type="GO" id="GO:0070180">
    <property type="term" value="F:large ribosomal subunit rRNA binding"/>
    <property type="evidence" value="ECO:0007669"/>
    <property type="project" value="UniProtKB-UniRule"/>
</dbReference>
<dbReference type="GO" id="GO:0003735">
    <property type="term" value="F:structural constituent of ribosome"/>
    <property type="evidence" value="ECO:0007669"/>
    <property type="project" value="InterPro"/>
</dbReference>
<dbReference type="GO" id="GO:0006412">
    <property type="term" value="P:translation"/>
    <property type="evidence" value="ECO:0007669"/>
    <property type="project" value="UniProtKB-UniRule"/>
</dbReference>
<dbReference type="CDD" id="cd00349">
    <property type="entry name" value="Ribosomal_L11"/>
    <property type="match status" value="1"/>
</dbReference>
<dbReference type="FunFam" id="1.10.10.250:FF:000001">
    <property type="entry name" value="50S ribosomal protein L11"/>
    <property type="match status" value="1"/>
</dbReference>
<dbReference type="FunFam" id="3.30.1550.10:FF:000001">
    <property type="entry name" value="50S ribosomal protein L11"/>
    <property type="match status" value="1"/>
</dbReference>
<dbReference type="Gene3D" id="1.10.10.250">
    <property type="entry name" value="Ribosomal protein L11, C-terminal domain"/>
    <property type="match status" value="1"/>
</dbReference>
<dbReference type="Gene3D" id="3.30.1550.10">
    <property type="entry name" value="Ribosomal protein L11/L12, N-terminal domain"/>
    <property type="match status" value="1"/>
</dbReference>
<dbReference type="HAMAP" id="MF_00736">
    <property type="entry name" value="Ribosomal_uL11"/>
    <property type="match status" value="1"/>
</dbReference>
<dbReference type="InterPro" id="IPR000911">
    <property type="entry name" value="Ribosomal_uL11"/>
</dbReference>
<dbReference type="InterPro" id="IPR006519">
    <property type="entry name" value="Ribosomal_uL11_bac-typ"/>
</dbReference>
<dbReference type="InterPro" id="IPR020783">
    <property type="entry name" value="Ribosomal_uL11_C"/>
</dbReference>
<dbReference type="InterPro" id="IPR036769">
    <property type="entry name" value="Ribosomal_uL11_C_sf"/>
</dbReference>
<dbReference type="InterPro" id="IPR020785">
    <property type="entry name" value="Ribosomal_uL11_CS"/>
</dbReference>
<dbReference type="InterPro" id="IPR020784">
    <property type="entry name" value="Ribosomal_uL11_N"/>
</dbReference>
<dbReference type="InterPro" id="IPR036796">
    <property type="entry name" value="Ribosomal_uL11_N_sf"/>
</dbReference>
<dbReference type="NCBIfam" id="TIGR01632">
    <property type="entry name" value="L11_bact"/>
    <property type="match status" value="1"/>
</dbReference>
<dbReference type="PANTHER" id="PTHR11661">
    <property type="entry name" value="60S RIBOSOMAL PROTEIN L12"/>
    <property type="match status" value="1"/>
</dbReference>
<dbReference type="PANTHER" id="PTHR11661:SF1">
    <property type="entry name" value="LARGE RIBOSOMAL SUBUNIT PROTEIN UL11M"/>
    <property type="match status" value="1"/>
</dbReference>
<dbReference type="Pfam" id="PF00298">
    <property type="entry name" value="Ribosomal_L11"/>
    <property type="match status" value="1"/>
</dbReference>
<dbReference type="Pfam" id="PF03946">
    <property type="entry name" value="Ribosomal_L11_N"/>
    <property type="match status" value="1"/>
</dbReference>
<dbReference type="SMART" id="SM00649">
    <property type="entry name" value="RL11"/>
    <property type="match status" value="1"/>
</dbReference>
<dbReference type="SUPFAM" id="SSF54747">
    <property type="entry name" value="Ribosomal L11/L12e N-terminal domain"/>
    <property type="match status" value="1"/>
</dbReference>
<dbReference type="SUPFAM" id="SSF46906">
    <property type="entry name" value="Ribosomal protein L11, C-terminal domain"/>
    <property type="match status" value="1"/>
</dbReference>
<dbReference type="PROSITE" id="PS00359">
    <property type="entry name" value="RIBOSOMAL_L11"/>
    <property type="match status" value="1"/>
</dbReference>
<proteinExistence type="inferred from homology"/>
<sequence length="144" mass="15020">MAKKIVGFVKLQVPAGKANPSPPIGPALGQRGLNIMEFCKAFNAQTQGVEPGLPLPVVITAYADKSFTFIIKTPPAITLIKKAIKLDKGSATPHSAKVGKITRAQLEEIAKAKMKDLTAADLDAAVRTIAGSARSMGVTVEGVV</sequence>
<organism>
    <name type="scientific">Polaromonas naphthalenivorans (strain CJ2)</name>
    <dbReference type="NCBI Taxonomy" id="365044"/>
    <lineage>
        <taxon>Bacteria</taxon>
        <taxon>Pseudomonadati</taxon>
        <taxon>Pseudomonadota</taxon>
        <taxon>Betaproteobacteria</taxon>
        <taxon>Burkholderiales</taxon>
        <taxon>Comamonadaceae</taxon>
        <taxon>Polaromonas</taxon>
    </lineage>
</organism>
<comment type="function">
    <text evidence="1">Forms part of the ribosomal stalk which helps the ribosome interact with GTP-bound translation factors.</text>
</comment>
<comment type="subunit">
    <text evidence="1">Part of the ribosomal stalk of the 50S ribosomal subunit. Interacts with L10 and the large rRNA to form the base of the stalk. L10 forms an elongated spine to which L12 dimers bind in a sequential fashion forming a multimeric L10(L12)X complex.</text>
</comment>
<comment type="PTM">
    <text evidence="1">One or more lysine residues are methylated.</text>
</comment>
<comment type="similarity">
    <text evidence="1">Belongs to the universal ribosomal protein uL11 family.</text>
</comment>
<keyword id="KW-0488">Methylation</keyword>
<keyword id="KW-1185">Reference proteome</keyword>
<keyword id="KW-0687">Ribonucleoprotein</keyword>
<keyword id="KW-0689">Ribosomal protein</keyword>
<keyword id="KW-0694">RNA-binding</keyword>
<keyword id="KW-0699">rRNA-binding</keyword>